<evidence type="ECO:0000255" key="1">
    <source>
        <dbReference type="HAMAP-Rule" id="MF_00021"/>
    </source>
</evidence>
<reference key="1">
    <citation type="journal article" date="2003" name="Proc. Natl. Acad. Sci. U.S.A.">
        <title>The complete genome sequence of the Arabidopsis and tomato pathogen Pseudomonas syringae pv. tomato DC3000.</title>
        <authorList>
            <person name="Buell C.R."/>
            <person name="Joardar V."/>
            <person name="Lindeberg M."/>
            <person name="Selengut J."/>
            <person name="Paulsen I.T."/>
            <person name="Gwinn M.L."/>
            <person name="Dodson R.J."/>
            <person name="DeBoy R.T."/>
            <person name="Durkin A.S."/>
            <person name="Kolonay J.F."/>
            <person name="Madupu R."/>
            <person name="Daugherty S.C."/>
            <person name="Brinkac L.M."/>
            <person name="Beanan M.J."/>
            <person name="Haft D.H."/>
            <person name="Nelson W.C."/>
            <person name="Davidsen T.M."/>
            <person name="Zafar N."/>
            <person name="Zhou L."/>
            <person name="Liu J."/>
            <person name="Yuan Q."/>
            <person name="Khouri H.M."/>
            <person name="Fedorova N.B."/>
            <person name="Tran B."/>
            <person name="Russell D."/>
            <person name="Berry K.J."/>
            <person name="Utterback T.R."/>
            <person name="Van Aken S.E."/>
            <person name="Feldblyum T.V."/>
            <person name="D'Ascenzo M."/>
            <person name="Deng W.-L."/>
            <person name="Ramos A.R."/>
            <person name="Alfano J.R."/>
            <person name="Cartinhour S."/>
            <person name="Chatterjee A.K."/>
            <person name="Delaney T.P."/>
            <person name="Lazarowitz S.G."/>
            <person name="Martin G.B."/>
            <person name="Schneider D.J."/>
            <person name="Tang X."/>
            <person name="Bender C.L."/>
            <person name="White O."/>
            <person name="Fraser C.M."/>
            <person name="Collmer A."/>
        </authorList>
    </citation>
    <scope>NUCLEOTIDE SEQUENCE [LARGE SCALE GENOMIC DNA]</scope>
    <source>
        <strain>ATCC BAA-871 / DC3000</strain>
    </source>
</reference>
<name>THII_PSESM</name>
<comment type="function">
    <text evidence="1">Catalyzes the ATP-dependent transfer of a sulfur to tRNA to produce 4-thiouridine in position 8 of tRNAs, which functions as a near-UV photosensor. Also catalyzes the transfer of sulfur to the sulfur carrier protein ThiS, forming ThiS-thiocarboxylate. This is a step in the synthesis of thiazole, in the thiamine biosynthesis pathway. The sulfur is donated as persulfide by IscS.</text>
</comment>
<comment type="catalytic activity">
    <reaction evidence="1">
        <text>[ThiI sulfur-carrier protein]-S-sulfanyl-L-cysteine + a uridine in tRNA + 2 reduced [2Fe-2S]-[ferredoxin] + ATP + H(+) = [ThiI sulfur-carrier protein]-L-cysteine + a 4-thiouridine in tRNA + 2 oxidized [2Fe-2S]-[ferredoxin] + AMP + diphosphate</text>
        <dbReference type="Rhea" id="RHEA:24176"/>
        <dbReference type="Rhea" id="RHEA-COMP:10000"/>
        <dbReference type="Rhea" id="RHEA-COMP:10001"/>
        <dbReference type="Rhea" id="RHEA-COMP:13337"/>
        <dbReference type="Rhea" id="RHEA-COMP:13338"/>
        <dbReference type="Rhea" id="RHEA-COMP:13339"/>
        <dbReference type="Rhea" id="RHEA-COMP:13340"/>
        <dbReference type="ChEBI" id="CHEBI:15378"/>
        <dbReference type="ChEBI" id="CHEBI:29950"/>
        <dbReference type="ChEBI" id="CHEBI:30616"/>
        <dbReference type="ChEBI" id="CHEBI:33019"/>
        <dbReference type="ChEBI" id="CHEBI:33737"/>
        <dbReference type="ChEBI" id="CHEBI:33738"/>
        <dbReference type="ChEBI" id="CHEBI:61963"/>
        <dbReference type="ChEBI" id="CHEBI:65315"/>
        <dbReference type="ChEBI" id="CHEBI:136798"/>
        <dbReference type="ChEBI" id="CHEBI:456215"/>
        <dbReference type="EC" id="2.8.1.4"/>
    </reaction>
</comment>
<comment type="catalytic activity">
    <reaction evidence="1">
        <text>[ThiS sulfur-carrier protein]-C-terminal Gly-Gly-AMP + S-sulfanyl-L-cysteinyl-[cysteine desulfurase] + AH2 = [ThiS sulfur-carrier protein]-C-terminal-Gly-aminoethanethioate + L-cysteinyl-[cysteine desulfurase] + A + AMP + 2 H(+)</text>
        <dbReference type="Rhea" id="RHEA:43340"/>
        <dbReference type="Rhea" id="RHEA-COMP:12157"/>
        <dbReference type="Rhea" id="RHEA-COMP:12158"/>
        <dbReference type="Rhea" id="RHEA-COMP:12910"/>
        <dbReference type="Rhea" id="RHEA-COMP:19908"/>
        <dbReference type="ChEBI" id="CHEBI:13193"/>
        <dbReference type="ChEBI" id="CHEBI:15378"/>
        <dbReference type="ChEBI" id="CHEBI:17499"/>
        <dbReference type="ChEBI" id="CHEBI:29950"/>
        <dbReference type="ChEBI" id="CHEBI:61963"/>
        <dbReference type="ChEBI" id="CHEBI:90618"/>
        <dbReference type="ChEBI" id="CHEBI:232372"/>
        <dbReference type="ChEBI" id="CHEBI:456215"/>
    </reaction>
</comment>
<comment type="pathway">
    <text evidence="1">Cofactor biosynthesis; thiamine diphosphate biosynthesis.</text>
</comment>
<comment type="subcellular location">
    <subcellularLocation>
        <location evidence="1">Cytoplasm</location>
    </subcellularLocation>
</comment>
<comment type="similarity">
    <text evidence="1">Belongs to the ThiI family.</text>
</comment>
<feature type="chain" id="PRO_0000154858" description="tRNA sulfurtransferase">
    <location>
        <begin position="1"/>
        <end position="484"/>
    </location>
</feature>
<feature type="domain" description="THUMP" evidence="1">
    <location>
        <begin position="63"/>
        <end position="167"/>
    </location>
</feature>
<feature type="domain" description="Rhodanese" evidence="1">
    <location>
        <begin position="405"/>
        <end position="483"/>
    </location>
</feature>
<feature type="active site" description="Cysteine persulfide intermediate" evidence="1">
    <location>
        <position position="457"/>
    </location>
</feature>
<feature type="binding site" evidence="1">
    <location>
        <begin position="185"/>
        <end position="186"/>
    </location>
    <ligand>
        <name>ATP</name>
        <dbReference type="ChEBI" id="CHEBI:30616"/>
    </ligand>
</feature>
<feature type="binding site" evidence="1">
    <location>
        <position position="267"/>
    </location>
    <ligand>
        <name>ATP</name>
        <dbReference type="ChEBI" id="CHEBI:30616"/>
    </ligand>
</feature>
<feature type="binding site" evidence="1">
    <location>
        <position position="289"/>
    </location>
    <ligand>
        <name>ATP</name>
        <dbReference type="ChEBI" id="CHEBI:30616"/>
    </ligand>
</feature>
<feature type="binding site" evidence="1">
    <location>
        <position position="298"/>
    </location>
    <ligand>
        <name>ATP</name>
        <dbReference type="ChEBI" id="CHEBI:30616"/>
    </ligand>
</feature>
<feature type="disulfide bond" description="Redox-active" evidence="1">
    <location>
        <begin position="346"/>
        <end position="457"/>
    </location>
</feature>
<dbReference type="EC" id="2.8.1.4" evidence="1"/>
<dbReference type="EMBL" id="AE016853">
    <property type="protein sequence ID" value="AAO53904.1"/>
    <property type="molecule type" value="Genomic_DNA"/>
</dbReference>
<dbReference type="RefSeq" id="NP_790209.1">
    <property type="nucleotide sequence ID" value="NC_004578.1"/>
</dbReference>
<dbReference type="RefSeq" id="WP_003380207.1">
    <property type="nucleotide sequence ID" value="NC_004578.1"/>
</dbReference>
<dbReference type="SMR" id="Q88AM9"/>
<dbReference type="STRING" id="223283.PSPTO_0360"/>
<dbReference type="DNASU" id="1181969"/>
<dbReference type="GeneID" id="1181969"/>
<dbReference type="KEGG" id="pst:PSPTO_0360"/>
<dbReference type="PATRIC" id="fig|223283.9.peg.377"/>
<dbReference type="eggNOG" id="COG0301">
    <property type="taxonomic scope" value="Bacteria"/>
</dbReference>
<dbReference type="eggNOG" id="COG0607">
    <property type="taxonomic scope" value="Bacteria"/>
</dbReference>
<dbReference type="HOGENOM" id="CLU_037952_4_1_6"/>
<dbReference type="OrthoDB" id="9773948at2"/>
<dbReference type="PhylomeDB" id="Q88AM9"/>
<dbReference type="UniPathway" id="UPA00060"/>
<dbReference type="Proteomes" id="UP000002515">
    <property type="component" value="Chromosome"/>
</dbReference>
<dbReference type="GO" id="GO:0005829">
    <property type="term" value="C:cytosol"/>
    <property type="evidence" value="ECO:0007669"/>
    <property type="project" value="TreeGrafter"/>
</dbReference>
<dbReference type="GO" id="GO:0005524">
    <property type="term" value="F:ATP binding"/>
    <property type="evidence" value="ECO:0007669"/>
    <property type="project" value="UniProtKB-UniRule"/>
</dbReference>
<dbReference type="GO" id="GO:0004810">
    <property type="term" value="F:CCA tRNA nucleotidyltransferase activity"/>
    <property type="evidence" value="ECO:0007669"/>
    <property type="project" value="InterPro"/>
</dbReference>
<dbReference type="GO" id="GO:0000049">
    <property type="term" value="F:tRNA binding"/>
    <property type="evidence" value="ECO:0007669"/>
    <property type="project" value="UniProtKB-UniRule"/>
</dbReference>
<dbReference type="GO" id="GO:0140741">
    <property type="term" value="F:tRNA-uracil-4 sulfurtransferase activity"/>
    <property type="evidence" value="ECO:0007669"/>
    <property type="project" value="UniProtKB-EC"/>
</dbReference>
<dbReference type="GO" id="GO:0009228">
    <property type="term" value="P:thiamine biosynthetic process"/>
    <property type="evidence" value="ECO:0007669"/>
    <property type="project" value="UniProtKB-KW"/>
</dbReference>
<dbReference type="GO" id="GO:0009229">
    <property type="term" value="P:thiamine diphosphate biosynthetic process"/>
    <property type="evidence" value="ECO:0007669"/>
    <property type="project" value="UniProtKB-UniRule"/>
</dbReference>
<dbReference type="GO" id="GO:0052837">
    <property type="term" value="P:thiazole biosynthetic process"/>
    <property type="evidence" value="ECO:0007669"/>
    <property type="project" value="InterPro"/>
</dbReference>
<dbReference type="GO" id="GO:0002937">
    <property type="term" value="P:tRNA 4-thiouridine biosynthesis"/>
    <property type="evidence" value="ECO:0007669"/>
    <property type="project" value="TreeGrafter"/>
</dbReference>
<dbReference type="CDD" id="cd01712">
    <property type="entry name" value="PPase_ThiI"/>
    <property type="match status" value="1"/>
</dbReference>
<dbReference type="CDD" id="cd11716">
    <property type="entry name" value="THUMP_ThiI"/>
    <property type="match status" value="1"/>
</dbReference>
<dbReference type="Gene3D" id="3.30.2130.30">
    <property type="match status" value="1"/>
</dbReference>
<dbReference type="Gene3D" id="3.40.50.620">
    <property type="entry name" value="HUPs"/>
    <property type="match status" value="1"/>
</dbReference>
<dbReference type="Gene3D" id="3.40.250.10">
    <property type="entry name" value="Rhodanese-like domain"/>
    <property type="match status" value="1"/>
</dbReference>
<dbReference type="HAMAP" id="MF_00021">
    <property type="entry name" value="ThiI"/>
    <property type="match status" value="1"/>
</dbReference>
<dbReference type="InterPro" id="IPR001763">
    <property type="entry name" value="Rhodanese-like_dom"/>
</dbReference>
<dbReference type="InterPro" id="IPR036873">
    <property type="entry name" value="Rhodanese-like_dom_sf"/>
</dbReference>
<dbReference type="InterPro" id="IPR014729">
    <property type="entry name" value="Rossmann-like_a/b/a_fold"/>
</dbReference>
<dbReference type="InterPro" id="IPR020536">
    <property type="entry name" value="ThiI_AANH"/>
</dbReference>
<dbReference type="InterPro" id="IPR054173">
    <property type="entry name" value="ThiI_fer"/>
</dbReference>
<dbReference type="InterPro" id="IPR049961">
    <property type="entry name" value="ThiI_N"/>
</dbReference>
<dbReference type="InterPro" id="IPR026340">
    <property type="entry name" value="THII_Thiazole_biosynth_dom"/>
</dbReference>
<dbReference type="InterPro" id="IPR004114">
    <property type="entry name" value="THUMP_dom"/>
</dbReference>
<dbReference type="InterPro" id="IPR049962">
    <property type="entry name" value="THUMP_ThiI"/>
</dbReference>
<dbReference type="InterPro" id="IPR003720">
    <property type="entry name" value="tRNA_STrfase"/>
</dbReference>
<dbReference type="InterPro" id="IPR050102">
    <property type="entry name" value="tRNA_sulfurtransferase_ThiI"/>
</dbReference>
<dbReference type="NCBIfam" id="TIGR04271">
    <property type="entry name" value="ThiI_C_thiazole"/>
    <property type="match status" value="1"/>
</dbReference>
<dbReference type="NCBIfam" id="TIGR00342">
    <property type="entry name" value="tRNA uracil 4-sulfurtransferase ThiI"/>
    <property type="match status" value="1"/>
</dbReference>
<dbReference type="PANTHER" id="PTHR43209">
    <property type="entry name" value="TRNA SULFURTRANSFERASE"/>
    <property type="match status" value="1"/>
</dbReference>
<dbReference type="PANTHER" id="PTHR43209:SF1">
    <property type="entry name" value="TRNA SULFURTRANSFERASE"/>
    <property type="match status" value="1"/>
</dbReference>
<dbReference type="Pfam" id="PF02568">
    <property type="entry name" value="ThiI"/>
    <property type="match status" value="1"/>
</dbReference>
<dbReference type="Pfam" id="PF22025">
    <property type="entry name" value="ThiI_fer"/>
    <property type="match status" value="1"/>
</dbReference>
<dbReference type="Pfam" id="PF02926">
    <property type="entry name" value="THUMP"/>
    <property type="match status" value="1"/>
</dbReference>
<dbReference type="SMART" id="SM00981">
    <property type="entry name" value="THUMP"/>
    <property type="match status" value="1"/>
</dbReference>
<dbReference type="SUPFAM" id="SSF52402">
    <property type="entry name" value="Adenine nucleotide alpha hydrolases-like"/>
    <property type="match status" value="1"/>
</dbReference>
<dbReference type="SUPFAM" id="SSF52821">
    <property type="entry name" value="Rhodanese/Cell cycle control phosphatase"/>
    <property type="match status" value="1"/>
</dbReference>
<dbReference type="SUPFAM" id="SSF143437">
    <property type="entry name" value="THUMP domain-like"/>
    <property type="match status" value="1"/>
</dbReference>
<dbReference type="PROSITE" id="PS50206">
    <property type="entry name" value="RHODANESE_3"/>
    <property type="match status" value="1"/>
</dbReference>
<dbReference type="PROSITE" id="PS51165">
    <property type="entry name" value="THUMP"/>
    <property type="match status" value="1"/>
</dbReference>
<keyword id="KW-0067">ATP-binding</keyword>
<keyword id="KW-0963">Cytoplasm</keyword>
<keyword id="KW-1015">Disulfide bond</keyword>
<keyword id="KW-0547">Nucleotide-binding</keyword>
<keyword id="KW-0676">Redox-active center</keyword>
<keyword id="KW-1185">Reference proteome</keyword>
<keyword id="KW-0694">RNA-binding</keyword>
<keyword id="KW-0784">Thiamine biosynthesis</keyword>
<keyword id="KW-0808">Transferase</keyword>
<keyword id="KW-0820">tRNA-binding</keyword>
<accession>Q88AM9</accession>
<gene>
    <name evidence="1" type="primary">thiI</name>
    <name type="ordered locus">PSPTO_0360</name>
</gene>
<organism>
    <name type="scientific">Pseudomonas syringae pv. tomato (strain ATCC BAA-871 / DC3000)</name>
    <dbReference type="NCBI Taxonomy" id="223283"/>
    <lineage>
        <taxon>Bacteria</taxon>
        <taxon>Pseudomonadati</taxon>
        <taxon>Pseudomonadota</taxon>
        <taxon>Gammaproteobacteria</taxon>
        <taxon>Pseudomonadales</taxon>
        <taxon>Pseudomonadaceae</taxon>
        <taxon>Pseudomonas</taxon>
    </lineage>
</organism>
<proteinExistence type="inferred from homology"/>
<protein>
    <recommendedName>
        <fullName evidence="1">tRNA sulfurtransferase</fullName>
        <ecNumber evidence="1">2.8.1.4</ecNumber>
    </recommendedName>
    <alternativeName>
        <fullName evidence="1">Sulfur carrier protein ThiS sulfurtransferase</fullName>
    </alternativeName>
    <alternativeName>
        <fullName evidence="1">Thiamine biosynthesis protein ThiI</fullName>
    </alternativeName>
    <alternativeName>
        <fullName evidence="1">tRNA 4-thiouridine synthase</fullName>
    </alternativeName>
</protein>
<sequence length="484" mass="54340">MKLIVKVFPEITIKSPPVRKKFIRQLGKNIRTVLRELDADIVVGGVWDNLEVETRLTDPKVLQGIRDRLSCMPGIANFLQVAEYPLGDMDDVVAKCKLHYADLLPGTMFSVRCKRAGRHDFSSMDVEKYVGSQLRMQCGAAGIELKKPDLVVRMEIRDQRLFVVHDQHKGMGGYPLGALEQTLVLMSGGFDSTVAAYQIMRRGLMAHFCFFNLGGRAHELGVMEVAHFIWKKYGSSQRVLFVSVPFEEVLGEILQKVDNSHMGVVLKRMMLRAASAVADRLEIDVLVTGEAISQVASQTLPNLSLIDAATDKLVLRPLVATHKQDIVDLATEIGTADFARHMPEYCGVISVNPKTNAKRNRVEYEEQQFDMAILEQALERAKLVSIDRVIDDLSRNIDIEEVSQALAGQVIIDIRHPDAQEDQPLQVPGVEIQTLPFYALNSRFKALDDTRQYLLYCDKGVMSRLHAHHLLSEGHANVRVYRPS</sequence>